<evidence type="ECO:0000255" key="1">
    <source>
        <dbReference type="HAMAP-Rule" id="MF_00113"/>
    </source>
</evidence>
<sequence length="341" mass="38558">MDIEAFDYHLPEALIAQTPLKNRDESRLLILGRQSGYIEHKHFKDVTDYLNEGDTLVLNDTRVMPARLFGMKEETGAKVEMLMLTQIEGNDWEVLLKPAKRIKVGNKLTFGEGKIIAECIEELDQGGRIMRLHYDGILQERLDELGEMPLPPYIKERLDDQERYQTVYAKASGSAAAPTAGLHFTDELLERIKAQGVNIAFITLHVGLGTFRPVSVDNIDDHEMHSEYYQMDEATANLLNSTRDNGNRIISVGTTSTRTLETIMQSSDRFVAKSGWTDIFIFPGFNFKAIDGLITNFHLPKSTLVMLVSAFSSRDYIINAYNQAVASEYRFFSFGDAMLII</sequence>
<accession>Q49Y78</accession>
<proteinExistence type="inferred from homology"/>
<reference key="1">
    <citation type="journal article" date="2005" name="Proc. Natl. Acad. Sci. U.S.A.">
        <title>Whole genome sequence of Staphylococcus saprophyticus reveals the pathogenesis of uncomplicated urinary tract infection.</title>
        <authorList>
            <person name="Kuroda M."/>
            <person name="Yamashita A."/>
            <person name="Hirakawa H."/>
            <person name="Kumano M."/>
            <person name="Morikawa K."/>
            <person name="Higashide M."/>
            <person name="Maruyama A."/>
            <person name="Inose Y."/>
            <person name="Matoba K."/>
            <person name="Toh H."/>
            <person name="Kuhara S."/>
            <person name="Hattori M."/>
            <person name="Ohta T."/>
        </authorList>
    </citation>
    <scope>NUCLEOTIDE SEQUENCE [LARGE SCALE GENOMIC DNA]</scope>
    <source>
        <strain>ATCC 15305 / DSM 20229 / NCIMB 8711 / NCTC 7292 / S-41</strain>
    </source>
</reference>
<keyword id="KW-0963">Cytoplasm</keyword>
<keyword id="KW-0671">Queuosine biosynthesis</keyword>
<keyword id="KW-1185">Reference proteome</keyword>
<keyword id="KW-0949">S-adenosyl-L-methionine</keyword>
<keyword id="KW-0808">Transferase</keyword>
<organism>
    <name type="scientific">Staphylococcus saprophyticus subsp. saprophyticus (strain ATCC 15305 / DSM 20229 / NCIMB 8711 / NCTC 7292 / S-41)</name>
    <dbReference type="NCBI Taxonomy" id="342451"/>
    <lineage>
        <taxon>Bacteria</taxon>
        <taxon>Bacillati</taxon>
        <taxon>Bacillota</taxon>
        <taxon>Bacilli</taxon>
        <taxon>Bacillales</taxon>
        <taxon>Staphylococcaceae</taxon>
        <taxon>Staphylococcus</taxon>
    </lineage>
</organism>
<dbReference type="EC" id="2.4.99.17" evidence="1"/>
<dbReference type="EMBL" id="AP008934">
    <property type="protein sequence ID" value="BAE18264.1"/>
    <property type="molecule type" value="Genomic_DNA"/>
</dbReference>
<dbReference type="RefSeq" id="WP_011302949.1">
    <property type="nucleotide sequence ID" value="NZ_MTGA01000038.1"/>
</dbReference>
<dbReference type="SMR" id="Q49Y78"/>
<dbReference type="GeneID" id="3614961"/>
<dbReference type="KEGG" id="ssp:SSP1119"/>
<dbReference type="PATRIC" id="fig|342451.11.peg.1118"/>
<dbReference type="eggNOG" id="COG0809">
    <property type="taxonomic scope" value="Bacteria"/>
</dbReference>
<dbReference type="HOGENOM" id="CLU_039110_1_0_9"/>
<dbReference type="OrthoDB" id="9805933at2"/>
<dbReference type="UniPathway" id="UPA00392"/>
<dbReference type="Proteomes" id="UP000006371">
    <property type="component" value="Chromosome"/>
</dbReference>
<dbReference type="GO" id="GO:0005737">
    <property type="term" value="C:cytoplasm"/>
    <property type="evidence" value="ECO:0007669"/>
    <property type="project" value="UniProtKB-SubCell"/>
</dbReference>
<dbReference type="GO" id="GO:0051075">
    <property type="term" value="F:S-adenosylmethionine:tRNA ribosyltransferase-isomerase activity"/>
    <property type="evidence" value="ECO:0007669"/>
    <property type="project" value="UniProtKB-EC"/>
</dbReference>
<dbReference type="GO" id="GO:0008616">
    <property type="term" value="P:queuosine biosynthetic process"/>
    <property type="evidence" value="ECO:0007669"/>
    <property type="project" value="UniProtKB-UniRule"/>
</dbReference>
<dbReference type="GO" id="GO:0002099">
    <property type="term" value="P:tRNA wobble guanine modification"/>
    <property type="evidence" value="ECO:0007669"/>
    <property type="project" value="TreeGrafter"/>
</dbReference>
<dbReference type="FunFam" id="2.40.10.240:FF:000002">
    <property type="entry name" value="S-adenosylmethionine:tRNA ribosyltransferase-isomerase"/>
    <property type="match status" value="1"/>
</dbReference>
<dbReference type="FunFam" id="3.40.1780.10:FF:000001">
    <property type="entry name" value="S-adenosylmethionine:tRNA ribosyltransferase-isomerase"/>
    <property type="match status" value="1"/>
</dbReference>
<dbReference type="Gene3D" id="2.40.10.240">
    <property type="entry name" value="QueA-like"/>
    <property type="match status" value="1"/>
</dbReference>
<dbReference type="Gene3D" id="3.40.1780.10">
    <property type="entry name" value="QueA-like"/>
    <property type="match status" value="1"/>
</dbReference>
<dbReference type="HAMAP" id="MF_00113">
    <property type="entry name" value="QueA"/>
    <property type="match status" value="1"/>
</dbReference>
<dbReference type="InterPro" id="IPR003699">
    <property type="entry name" value="QueA"/>
</dbReference>
<dbReference type="InterPro" id="IPR042118">
    <property type="entry name" value="QueA_dom1"/>
</dbReference>
<dbReference type="InterPro" id="IPR042119">
    <property type="entry name" value="QueA_dom2"/>
</dbReference>
<dbReference type="InterPro" id="IPR036100">
    <property type="entry name" value="QueA_sf"/>
</dbReference>
<dbReference type="NCBIfam" id="NF001140">
    <property type="entry name" value="PRK00147.1"/>
    <property type="match status" value="1"/>
</dbReference>
<dbReference type="NCBIfam" id="TIGR00113">
    <property type="entry name" value="queA"/>
    <property type="match status" value="1"/>
</dbReference>
<dbReference type="PANTHER" id="PTHR30307">
    <property type="entry name" value="S-ADENOSYLMETHIONINE:TRNA RIBOSYLTRANSFERASE-ISOMERASE"/>
    <property type="match status" value="1"/>
</dbReference>
<dbReference type="PANTHER" id="PTHR30307:SF0">
    <property type="entry name" value="S-ADENOSYLMETHIONINE:TRNA RIBOSYLTRANSFERASE-ISOMERASE"/>
    <property type="match status" value="1"/>
</dbReference>
<dbReference type="Pfam" id="PF02547">
    <property type="entry name" value="Queuosine_synth"/>
    <property type="match status" value="1"/>
</dbReference>
<dbReference type="SUPFAM" id="SSF111337">
    <property type="entry name" value="QueA-like"/>
    <property type="match status" value="1"/>
</dbReference>
<protein>
    <recommendedName>
        <fullName evidence="1">S-adenosylmethionine:tRNA ribosyltransferase-isomerase</fullName>
        <ecNumber evidence="1">2.4.99.17</ecNumber>
    </recommendedName>
    <alternativeName>
        <fullName evidence="1">Queuosine biosynthesis protein QueA</fullName>
    </alternativeName>
</protein>
<feature type="chain" id="PRO_0000231377" description="S-adenosylmethionine:tRNA ribosyltransferase-isomerase">
    <location>
        <begin position="1"/>
        <end position="341"/>
    </location>
</feature>
<comment type="function">
    <text evidence="1">Transfers and isomerizes the ribose moiety from AdoMet to the 7-aminomethyl group of 7-deazaguanine (preQ1-tRNA) to give epoxyqueuosine (oQ-tRNA).</text>
</comment>
<comment type="catalytic activity">
    <reaction evidence="1">
        <text>7-aminomethyl-7-carbaguanosine(34) in tRNA + S-adenosyl-L-methionine = epoxyqueuosine(34) in tRNA + adenine + L-methionine + 2 H(+)</text>
        <dbReference type="Rhea" id="RHEA:32155"/>
        <dbReference type="Rhea" id="RHEA-COMP:10342"/>
        <dbReference type="Rhea" id="RHEA-COMP:18582"/>
        <dbReference type="ChEBI" id="CHEBI:15378"/>
        <dbReference type="ChEBI" id="CHEBI:16708"/>
        <dbReference type="ChEBI" id="CHEBI:57844"/>
        <dbReference type="ChEBI" id="CHEBI:59789"/>
        <dbReference type="ChEBI" id="CHEBI:82833"/>
        <dbReference type="ChEBI" id="CHEBI:194443"/>
        <dbReference type="EC" id="2.4.99.17"/>
    </reaction>
</comment>
<comment type="pathway">
    <text evidence="1">tRNA modification; tRNA-queuosine biosynthesis.</text>
</comment>
<comment type="subunit">
    <text evidence="1">Monomer.</text>
</comment>
<comment type="subcellular location">
    <subcellularLocation>
        <location evidence="1">Cytoplasm</location>
    </subcellularLocation>
</comment>
<comment type="similarity">
    <text evidence="1">Belongs to the QueA family.</text>
</comment>
<gene>
    <name evidence="1" type="primary">queA</name>
    <name type="ordered locus">SSP1119</name>
</gene>
<name>QUEA_STAS1</name>